<protein>
    <recommendedName>
        <fullName evidence="2">UPF0761 membrane protein YihY</fullName>
    </recommendedName>
</protein>
<sequence length="290" mass="32645">MLKTVHQKAGRHTRPVRAWLKLLWQRIDEDNMTTLAGNLAYVSLLSLVPLIAVVFALFAAFPMFSDVSIQLRHFIFANFMPATGDVIQRYIEQFVANSNKMTAVGACGLIVTALLLMYAIDSALNTIWRSKRTRPKVYSFAVYWMILTLGPLLAGASLAISSYLLSLRWASDLNTVIDNVLRILPLLLSWISFWLLYSIVPTTRVPNRDALVGAFVAALLFEAGKKGFALYITMFPSYQLIYGVLAVIPILFVWVYWTWCIVLLGAEITVTLGEYRKLKQAAEQEEADQP</sequence>
<proteinExistence type="inferred from homology"/>
<gene>
    <name evidence="2" type="primary">yihY</name>
    <name type="ordered locus">SCH_3917</name>
</gene>
<name>YIHY_SALCH</name>
<dbReference type="EMBL" id="AE017220">
    <property type="protein sequence ID" value="AAX67823.1"/>
    <property type="molecule type" value="Genomic_DNA"/>
</dbReference>
<dbReference type="RefSeq" id="WP_000921423.1">
    <property type="nucleotide sequence ID" value="NC_006905.1"/>
</dbReference>
<dbReference type="KEGG" id="sec:SCH_3917"/>
<dbReference type="HOGENOM" id="CLU_032288_0_0_6"/>
<dbReference type="Proteomes" id="UP000000538">
    <property type="component" value="Chromosome"/>
</dbReference>
<dbReference type="GO" id="GO:0005886">
    <property type="term" value="C:plasma membrane"/>
    <property type="evidence" value="ECO:0007669"/>
    <property type="project" value="UniProtKB-SubCell"/>
</dbReference>
<dbReference type="HAMAP" id="MF_00672">
    <property type="entry name" value="UPF0761"/>
    <property type="match status" value="1"/>
</dbReference>
<dbReference type="InterPro" id="IPR023679">
    <property type="entry name" value="UPF0761_bac"/>
</dbReference>
<dbReference type="InterPro" id="IPR017039">
    <property type="entry name" value="Virul_fac_BrkB"/>
</dbReference>
<dbReference type="NCBIfam" id="NF002457">
    <property type="entry name" value="PRK01637.1"/>
    <property type="match status" value="1"/>
</dbReference>
<dbReference type="NCBIfam" id="TIGR00765">
    <property type="entry name" value="yihY_not_rbn"/>
    <property type="match status" value="1"/>
</dbReference>
<dbReference type="PANTHER" id="PTHR30213">
    <property type="entry name" value="INNER MEMBRANE PROTEIN YHJD"/>
    <property type="match status" value="1"/>
</dbReference>
<dbReference type="PANTHER" id="PTHR30213:SF0">
    <property type="entry name" value="UPF0761 MEMBRANE PROTEIN YIHY"/>
    <property type="match status" value="1"/>
</dbReference>
<dbReference type="Pfam" id="PF03631">
    <property type="entry name" value="Virul_fac_BrkB"/>
    <property type="match status" value="1"/>
</dbReference>
<dbReference type="PIRSF" id="PIRSF035875">
    <property type="entry name" value="RNase_BN"/>
    <property type="match status" value="1"/>
</dbReference>
<keyword id="KW-0997">Cell inner membrane</keyword>
<keyword id="KW-1003">Cell membrane</keyword>
<keyword id="KW-0472">Membrane</keyword>
<keyword id="KW-0812">Transmembrane</keyword>
<keyword id="KW-1133">Transmembrane helix</keyword>
<feature type="chain" id="PRO_0000200993" description="UPF0761 membrane protein YihY">
    <location>
        <begin position="1"/>
        <end position="290"/>
    </location>
</feature>
<feature type="topological domain" description="Cytoplasmic" evidence="1">
    <location>
        <begin position="1"/>
        <end position="43"/>
    </location>
</feature>
<feature type="transmembrane region" description="Helical" evidence="2">
    <location>
        <begin position="44"/>
        <end position="64"/>
    </location>
</feature>
<feature type="topological domain" description="Periplasmic" evidence="1">
    <location>
        <begin position="65"/>
        <end position="103"/>
    </location>
</feature>
<feature type="transmembrane region" description="Helical" evidence="2">
    <location>
        <begin position="104"/>
        <end position="124"/>
    </location>
</feature>
<feature type="topological domain" description="Cytoplasmic" evidence="1">
    <location>
        <begin position="125"/>
        <end position="139"/>
    </location>
</feature>
<feature type="transmembrane region" description="Helical" evidence="2">
    <location>
        <begin position="140"/>
        <end position="160"/>
    </location>
</feature>
<feature type="topological domain" description="Periplasmic" evidence="1">
    <location>
        <begin position="161"/>
        <end position="182"/>
    </location>
</feature>
<feature type="transmembrane region" description="Helical" evidence="2">
    <location>
        <begin position="183"/>
        <end position="203"/>
    </location>
</feature>
<feature type="topological domain" description="Cytoplasmic" evidence="1">
    <location>
        <begin position="204"/>
        <end position="209"/>
    </location>
</feature>
<feature type="transmembrane region" description="Helical" evidence="2">
    <location>
        <begin position="210"/>
        <end position="230"/>
    </location>
</feature>
<feature type="topological domain" description="Periplasmic" evidence="1">
    <location>
        <begin position="231"/>
        <end position="243"/>
    </location>
</feature>
<feature type="transmembrane region" description="Helical" evidence="2">
    <location>
        <begin position="244"/>
        <end position="264"/>
    </location>
</feature>
<feature type="topological domain" description="Cytoplasmic" evidence="1">
    <location>
        <begin position="265"/>
        <end position="290"/>
    </location>
</feature>
<accession>Q57HI9</accession>
<organism>
    <name type="scientific">Salmonella choleraesuis (strain SC-B67)</name>
    <dbReference type="NCBI Taxonomy" id="321314"/>
    <lineage>
        <taxon>Bacteria</taxon>
        <taxon>Pseudomonadati</taxon>
        <taxon>Pseudomonadota</taxon>
        <taxon>Gammaproteobacteria</taxon>
        <taxon>Enterobacterales</taxon>
        <taxon>Enterobacteriaceae</taxon>
        <taxon>Salmonella</taxon>
    </lineage>
</organism>
<evidence type="ECO:0000255" key="1"/>
<evidence type="ECO:0000255" key="2">
    <source>
        <dbReference type="HAMAP-Rule" id="MF_00672"/>
    </source>
</evidence>
<comment type="subcellular location">
    <subcellularLocation>
        <location evidence="2">Cell inner membrane</location>
        <topology evidence="2">Multi-pass membrane protein</topology>
    </subcellularLocation>
</comment>
<comment type="similarity">
    <text evidence="2">Belongs to the UPF0761 family.</text>
</comment>
<reference key="1">
    <citation type="journal article" date="2005" name="Nucleic Acids Res.">
        <title>The genome sequence of Salmonella enterica serovar Choleraesuis, a highly invasive and resistant zoonotic pathogen.</title>
        <authorList>
            <person name="Chiu C.-H."/>
            <person name="Tang P."/>
            <person name="Chu C."/>
            <person name="Hu S."/>
            <person name="Bao Q."/>
            <person name="Yu J."/>
            <person name="Chou Y.-Y."/>
            <person name="Wang H.-S."/>
            <person name="Lee Y.-S."/>
        </authorList>
    </citation>
    <scope>NUCLEOTIDE SEQUENCE [LARGE SCALE GENOMIC DNA]</scope>
    <source>
        <strain>SC-B67</strain>
    </source>
</reference>